<evidence type="ECO:0000250" key="1"/>
<evidence type="ECO:0000305" key="2"/>
<dbReference type="EMBL" id="AL123456">
    <property type="protein sequence ID" value="CCP42775.1"/>
    <property type="molecule type" value="Genomic_DNA"/>
</dbReference>
<dbReference type="PIR" id="E70913">
    <property type="entry name" value="E70913"/>
</dbReference>
<dbReference type="RefSeq" id="NP_214567.1">
    <property type="nucleotide sequence ID" value="NC_000962.3"/>
</dbReference>
<dbReference type="RefSeq" id="WP_003400520.1">
    <property type="nucleotide sequence ID" value="NZ_NVQJ01000005.1"/>
</dbReference>
<dbReference type="PDB" id="5V93">
    <property type="method" value="EM"/>
    <property type="resolution" value="4.00 A"/>
    <property type="chains" value="f=1-96"/>
</dbReference>
<dbReference type="PDB" id="7KGB">
    <property type="method" value="EM"/>
    <property type="resolution" value="2.70 A"/>
    <property type="chains" value="f=1-96"/>
</dbReference>
<dbReference type="PDB" id="7MSC">
    <property type="method" value="EM"/>
    <property type="resolution" value="2.97 A"/>
    <property type="chains" value="f=1-96"/>
</dbReference>
<dbReference type="PDB" id="7MSH">
    <property type="method" value="EM"/>
    <property type="resolution" value="3.23 A"/>
    <property type="chains" value="f=1-96"/>
</dbReference>
<dbReference type="PDB" id="7MSM">
    <property type="method" value="EM"/>
    <property type="resolution" value="2.79 A"/>
    <property type="chains" value="f=1-96"/>
</dbReference>
<dbReference type="PDB" id="7MSZ">
    <property type="method" value="EM"/>
    <property type="resolution" value="3.10 A"/>
    <property type="chains" value="f=1-96"/>
</dbReference>
<dbReference type="PDB" id="7MT2">
    <property type="method" value="EM"/>
    <property type="resolution" value="2.76 A"/>
    <property type="chains" value="f=1-96"/>
</dbReference>
<dbReference type="PDB" id="7MT3">
    <property type="method" value="EM"/>
    <property type="resolution" value="2.80 A"/>
    <property type="chains" value="f=1-96"/>
</dbReference>
<dbReference type="PDB" id="7MT7">
    <property type="method" value="EM"/>
    <property type="resolution" value="2.71 A"/>
    <property type="chains" value="f=1-96"/>
</dbReference>
<dbReference type="PDB" id="7SFR">
    <property type="method" value="EM"/>
    <property type="resolution" value="2.60 A"/>
    <property type="chains" value="f=1-96"/>
</dbReference>
<dbReference type="PDBsum" id="5V93"/>
<dbReference type="PDBsum" id="7KGB"/>
<dbReference type="PDBsum" id="7MSC"/>
<dbReference type="PDBsum" id="7MSH"/>
<dbReference type="PDBsum" id="7MSM"/>
<dbReference type="PDBsum" id="7MSZ"/>
<dbReference type="PDBsum" id="7MT2"/>
<dbReference type="PDBsum" id="7MT3"/>
<dbReference type="PDBsum" id="7MT7"/>
<dbReference type="PDBsum" id="7SFR"/>
<dbReference type="EMDB" id="EMD-22865"/>
<dbReference type="EMDB" id="EMD-23961"/>
<dbReference type="EMDB" id="EMD-23962"/>
<dbReference type="EMDB" id="EMD-23969"/>
<dbReference type="EMDB" id="EMD-23972"/>
<dbReference type="EMDB" id="EMD-23974"/>
<dbReference type="EMDB" id="EMD-23975"/>
<dbReference type="EMDB" id="EMD-23976"/>
<dbReference type="EMDB" id="EMD-8645"/>
<dbReference type="SMR" id="P9WH31"/>
<dbReference type="FunCoup" id="P9WH31">
    <property type="interactions" value="115"/>
</dbReference>
<dbReference type="STRING" id="83332.Rv0053"/>
<dbReference type="PaxDb" id="83332-Rv0053"/>
<dbReference type="DNASU" id="887020"/>
<dbReference type="GeneID" id="45424012"/>
<dbReference type="GeneID" id="887020"/>
<dbReference type="KEGG" id="mtu:Rv0053"/>
<dbReference type="KEGG" id="mtv:RVBD_0053"/>
<dbReference type="TubercuList" id="Rv0053"/>
<dbReference type="eggNOG" id="COG0360">
    <property type="taxonomic scope" value="Bacteria"/>
</dbReference>
<dbReference type="InParanoid" id="P9WH31"/>
<dbReference type="OrthoDB" id="9812702at2"/>
<dbReference type="PhylomeDB" id="P9WH31"/>
<dbReference type="PRO" id="PR:P9WH31"/>
<dbReference type="Proteomes" id="UP000001584">
    <property type="component" value="Chromosome"/>
</dbReference>
<dbReference type="GO" id="GO:0005737">
    <property type="term" value="C:cytoplasm"/>
    <property type="evidence" value="ECO:0007669"/>
    <property type="project" value="UniProtKB-ARBA"/>
</dbReference>
<dbReference type="GO" id="GO:0009274">
    <property type="term" value="C:peptidoglycan-based cell wall"/>
    <property type="evidence" value="ECO:0007005"/>
    <property type="project" value="MTBBASE"/>
</dbReference>
<dbReference type="GO" id="GO:0005886">
    <property type="term" value="C:plasma membrane"/>
    <property type="evidence" value="ECO:0007005"/>
    <property type="project" value="MTBBASE"/>
</dbReference>
<dbReference type="GO" id="GO:1990904">
    <property type="term" value="C:ribonucleoprotein complex"/>
    <property type="evidence" value="ECO:0007669"/>
    <property type="project" value="UniProtKB-KW"/>
</dbReference>
<dbReference type="GO" id="GO:0005840">
    <property type="term" value="C:ribosome"/>
    <property type="evidence" value="ECO:0007669"/>
    <property type="project" value="UniProtKB-KW"/>
</dbReference>
<dbReference type="GO" id="GO:0070181">
    <property type="term" value="F:small ribosomal subunit rRNA binding"/>
    <property type="evidence" value="ECO:0000318"/>
    <property type="project" value="GO_Central"/>
</dbReference>
<dbReference type="GO" id="GO:0003735">
    <property type="term" value="F:structural constituent of ribosome"/>
    <property type="evidence" value="ECO:0000318"/>
    <property type="project" value="GO_Central"/>
</dbReference>
<dbReference type="GO" id="GO:0006412">
    <property type="term" value="P:translation"/>
    <property type="evidence" value="ECO:0007669"/>
    <property type="project" value="UniProtKB-UniRule"/>
</dbReference>
<dbReference type="CDD" id="cd00473">
    <property type="entry name" value="bS6"/>
    <property type="match status" value="1"/>
</dbReference>
<dbReference type="FunFam" id="3.30.70.60:FF:000002">
    <property type="entry name" value="30S ribosomal protein S6"/>
    <property type="match status" value="1"/>
</dbReference>
<dbReference type="Gene3D" id="3.30.70.60">
    <property type="match status" value="1"/>
</dbReference>
<dbReference type="HAMAP" id="MF_00360">
    <property type="entry name" value="Ribosomal_bS6"/>
    <property type="match status" value="1"/>
</dbReference>
<dbReference type="InterPro" id="IPR000529">
    <property type="entry name" value="Ribosomal_bS6"/>
</dbReference>
<dbReference type="InterPro" id="IPR020815">
    <property type="entry name" value="Ribosomal_bS6_CS"/>
</dbReference>
<dbReference type="InterPro" id="IPR035980">
    <property type="entry name" value="Ribosomal_bS6_sf"/>
</dbReference>
<dbReference type="InterPro" id="IPR020814">
    <property type="entry name" value="Ribosomal_S6_plastid/chlpt"/>
</dbReference>
<dbReference type="InterPro" id="IPR014717">
    <property type="entry name" value="Transl_elong_EF1B/ribsomal_bS6"/>
</dbReference>
<dbReference type="NCBIfam" id="TIGR00166">
    <property type="entry name" value="S6"/>
    <property type="match status" value="1"/>
</dbReference>
<dbReference type="PANTHER" id="PTHR21011">
    <property type="entry name" value="MITOCHONDRIAL 28S RIBOSOMAL PROTEIN S6"/>
    <property type="match status" value="1"/>
</dbReference>
<dbReference type="PANTHER" id="PTHR21011:SF1">
    <property type="entry name" value="SMALL RIBOSOMAL SUBUNIT PROTEIN BS6M"/>
    <property type="match status" value="1"/>
</dbReference>
<dbReference type="Pfam" id="PF01250">
    <property type="entry name" value="Ribosomal_S6"/>
    <property type="match status" value="1"/>
</dbReference>
<dbReference type="SUPFAM" id="SSF54995">
    <property type="entry name" value="Ribosomal protein S6"/>
    <property type="match status" value="1"/>
</dbReference>
<dbReference type="PROSITE" id="PS01048">
    <property type="entry name" value="RIBOSOMAL_S6"/>
    <property type="match status" value="1"/>
</dbReference>
<keyword id="KW-0002">3D-structure</keyword>
<keyword id="KW-1185">Reference proteome</keyword>
<keyword id="KW-0687">Ribonucleoprotein</keyword>
<keyword id="KW-0689">Ribosomal protein</keyword>
<keyword id="KW-0694">RNA-binding</keyword>
<keyword id="KW-0699">rRNA-binding</keyword>
<organism>
    <name type="scientific">Mycobacterium tuberculosis (strain ATCC 25618 / H37Rv)</name>
    <dbReference type="NCBI Taxonomy" id="83332"/>
    <lineage>
        <taxon>Bacteria</taxon>
        <taxon>Bacillati</taxon>
        <taxon>Actinomycetota</taxon>
        <taxon>Actinomycetes</taxon>
        <taxon>Mycobacteriales</taxon>
        <taxon>Mycobacteriaceae</taxon>
        <taxon>Mycobacterium</taxon>
        <taxon>Mycobacterium tuberculosis complex</taxon>
    </lineage>
</organism>
<sequence length="96" mass="10935">MRPYEIMVILDPTLDERTVAPSLETFLNVVRKDGGKVEKVDIWGKRRLAYEIAKHAEGIYVVIDVKAAPATVSELDRQLSLNESVLRTKVMRTDKH</sequence>
<accession>P9WH31</accession>
<accession>L0T2F2</accession>
<accession>P66591</accession>
<accession>P71710</accession>
<name>RS6_MYCTU</name>
<proteinExistence type="evidence at protein level"/>
<protein>
    <recommendedName>
        <fullName evidence="2">Small ribosomal subunit protein bS6</fullName>
    </recommendedName>
    <alternativeName>
        <fullName>30S ribosomal protein S6</fullName>
    </alternativeName>
</protein>
<gene>
    <name type="primary">rpsF</name>
    <name type="ordered locus">Rv0053</name>
    <name type="ORF">MTCY21D4.16</name>
</gene>
<comment type="function">
    <text evidence="1">Binds together with bS18 to 16S ribosomal RNA.</text>
</comment>
<comment type="similarity">
    <text evidence="2">Belongs to the bacterial ribosomal protein bS6 family.</text>
</comment>
<feature type="chain" id="PRO_0000176802" description="Small ribosomal subunit protein bS6">
    <location>
        <begin position="1"/>
        <end position="96"/>
    </location>
</feature>
<reference key="1">
    <citation type="journal article" date="1998" name="Nature">
        <title>Deciphering the biology of Mycobacterium tuberculosis from the complete genome sequence.</title>
        <authorList>
            <person name="Cole S.T."/>
            <person name="Brosch R."/>
            <person name="Parkhill J."/>
            <person name="Garnier T."/>
            <person name="Churcher C.M."/>
            <person name="Harris D.E."/>
            <person name="Gordon S.V."/>
            <person name="Eiglmeier K."/>
            <person name="Gas S."/>
            <person name="Barry C.E. III"/>
            <person name="Tekaia F."/>
            <person name="Badcock K."/>
            <person name="Basham D."/>
            <person name="Brown D."/>
            <person name="Chillingworth T."/>
            <person name="Connor R."/>
            <person name="Davies R.M."/>
            <person name="Devlin K."/>
            <person name="Feltwell T."/>
            <person name="Gentles S."/>
            <person name="Hamlin N."/>
            <person name="Holroyd S."/>
            <person name="Hornsby T."/>
            <person name="Jagels K."/>
            <person name="Krogh A."/>
            <person name="McLean J."/>
            <person name="Moule S."/>
            <person name="Murphy L.D."/>
            <person name="Oliver S."/>
            <person name="Osborne J."/>
            <person name="Quail M.A."/>
            <person name="Rajandream M.A."/>
            <person name="Rogers J."/>
            <person name="Rutter S."/>
            <person name="Seeger K."/>
            <person name="Skelton S."/>
            <person name="Squares S."/>
            <person name="Squares R."/>
            <person name="Sulston J.E."/>
            <person name="Taylor K."/>
            <person name="Whitehead S."/>
            <person name="Barrell B.G."/>
        </authorList>
    </citation>
    <scope>NUCLEOTIDE SEQUENCE [LARGE SCALE GENOMIC DNA]</scope>
    <source>
        <strain>ATCC 25618 / H37Rv</strain>
    </source>
</reference>
<reference key="2">
    <citation type="journal article" date="2011" name="Mol. Cell. Proteomics">
        <title>Proteogenomic analysis of Mycobacterium tuberculosis by high resolution mass spectrometry.</title>
        <authorList>
            <person name="Kelkar D.S."/>
            <person name="Kumar D."/>
            <person name="Kumar P."/>
            <person name="Balakrishnan L."/>
            <person name="Muthusamy B."/>
            <person name="Yadav A.K."/>
            <person name="Shrivastava P."/>
            <person name="Marimuthu A."/>
            <person name="Anand S."/>
            <person name="Sundaram H."/>
            <person name="Kingsbury R."/>
            <person name="Harsha H.C."/>
            <person name="Nair B."/>
            <person name="Prasad T.S."/>
            <person name="Chauhan D.S."/>
            <person name="Katoch K."/>
            <person name="Katoch V.M."/>
            <person name="Kumar P."/>
            <person name="Chaerkady R."/>
            <person name="Ramachandran S."/>
            <person name="Dash D."/>
            <person name="Pandey A."/>
        </authorList>
    </citation>
    <scope>IDENTIFICATION BY MASS SPECTROMETRY [LARGE SCALE ANALYSIS]</scope>
    <source>
        <strain>ATCC 25618 / H37Rv</strain>
    </source>
</reference>